<organism>
    <name type="scientific">Caenorhabditis elegans</name>
    <dbReference type="NCBI Taxonomy" id="6239"/>
    <lineage>
        <taxon>Eukaryota</taxon>
        <taxon>Metazoa</taxon>
        <taxon>Ecdysozoa</taxon>
        <taxon>Nematoda</taxon>
        <taxon>Chromadorea</taxon>
        <taxon>Rhabditida</taxon>
        <taxon>Rhabditina</taxon>
        <taxon>Rhabditomorpha</taxon>
        <taxon>Rhabditoidea</taxon>
        <taxon>Rhabditidae</taxon>
        <taxon>Peloderinae</taxon>
        <taxon>Caenorhabditis</taxon>
    </lineage>
</organism>
<gene>
    <name type="ORF">R08C7.12</name>
</gene>
<proteinExistence type="evidence at transcript level"/>
<evidence type="ECO:0000256" key="1">
    <source>
        <dbReference type="SAM" id="MobiDB-lite"/>
    </source>
</evidence>
<evidence type="ECO:0000305" key="2"/>
<protein>
    <recommendedName>
        <fullName>Uncharacterized protein R08C7.12</fullName>
    </recommendedName>
</protein>
<reference key="1">
    <citation type="journal article" date="1998" name="Science">
        <title>Genome sequence of the nematode C. elegans: a platform for investigating biology.</title>
        <authorList>
            <consortium name="The C. elegans sequencing consortium"/>
        </authorList>
    </citation>
    <scope>NUCLEOTIDE SEQUENCE [LARGE SCALE GENOMIC DNA]</scope>
    <scope>ALTERNATIVE SPLICING</scope>
    <source>
        <strain>Bristol N2</strain>
    </source>
</reference>
<reference key="2">
    <citation type="submission" date="2000-08" db="EMBL/GenBank/DDBJ databases">
        <title>The Caenorhabditis elegans transcriptome project, a complementary view of the genome.</title>
        <authorList>
            <person name="Kohara Y."/>
            <person name="Shin-i T."/>
            <person name="Suzuki Y."/>
            <person name="Sugano S."/>
            <person name="Potdevin M."/>
            <person name="Thierry-Mieg Y."/>
            <person name="Thierry-Mieg D."/>
            <person name="Thierry-Mieg J."/>
        </authorList>
    </citation>
    <scope>NUCLEOTIDE SEQUENCE [LARGE SCALE MRNA]</scope>
    <source>
        <strain>Bristol N2</strain>
    </source>
</reference>
<name>YNPI_CAEEL</name>
<sequence length="335" mass="37008">MASPHAENDMVPEMIDHRHLQMWKWLHSRSGARGNTSETSFESSVSVSTNSFDFSADMSRSIDSSSSRMLPSPITNFVTPSSSFSSHQMHDIYSLAASYLQAPPPPYTPTTAFHPHNAHQLLLLHNMTAAVQTPEDPDIDVVGLADTTNLVSLNDKEDEEKLDQTTESEESDRISISTTEECPLDLTFKPTSLDSPTSSTFIPLRPSVIIDHHIPKPHTSVRRSMSSVSSSASSTQEEVAAHFRRSLSGKWPKRCKVNSEEARNSPLRRRPSFNTHTSVSSLSVHSVSPTPPVTSSAQTIIVNNHCSDTTLSVADHFRRALLGKGLFDFQRKSNK</sequence>
<dbReference type="EMBL" id="FO081646">
    <property type="protein sequence ID" value="CCD73095.1"/>
    <property type="molecule type" value="Genomic_DNA"/>
</dbReference>
<dbReference type="EMBL" id="FO081646">
    <property type="protein sequence ID" value="CCD73099.1"/>
    <property type="molecule type" value="Genomic_DNA"/>
</dbReference>
<dbReference type="EMBL" id="AF292053">
    <property type="protein sequence ID" value="AAG41149.1"/>
    <property type="molecule type" value="mRNA"/>
</dbReference>
<dbReference type="RefSeq" id="NP_001255261.1">
    <molecule id="Q9GQ60-1"/>
    <property type="nucleotide sequence ID" value="NM_001268332.2"/>
</dbReference>
<dbReference type="RefSeq" id="NP_001255262.1">
    <molecule id="Q9GQ60-2"/>
    <property type="nucleotide sequence ID" value="NM_001268333.4"/>
</dbReference>
<dbReference type="FunCoup" id="Q9GQ60">
    <property type="interactions" value="14"/>
</dbReference>
<dbReference type="PaxDb" id="6239-R08C7.12b"/>
<dbReference type="EnsemblMetazoa" id="R08C7.12a.1">
    <molecule id="Q9GQ60-2"/>
    <property type="protein sequence ID" value="R08C7.12a.1"/>
    <property type="gene ID" value="WBGene00019955"/>
</dbReference>
<dbReference type="EnsemblMetazoa" id="R08C7.12b.1">
    <molecule id="Q9GQ60-1"/>
    <property type="protein sequence ID" value="R08C7.12b.1"/>
    <property type="gene ID" value="WBGene00019955"/>
</dbReference>
<dbReference type="GeneID" id="177214"/>
<dbReference type="KEGG" id="cel:CELE_R08C7.12"/>
<dbReference type="UCSC" id="R08C7.12.1">
    <molecule id="Q9GQ60-1"/>
    <property type="organism name" value="c. elegans"/>
</dbReference>
<dbReference type="AGR" id="WB:WBGene00019955"/>
<dbReference type="CTD" id="177214"/>
<dbReference type="WormBase" id="R08C7.12a">
    <molecule id="Q9GQ60-2"/>
    <property type="protein sequence ID" value="CE28752"/>
    <property type="gene ID" value="WBGene00019955"/>
</dbReference>
<dbReference type="WormBase" id="R08C7.12b">
    <molecule id="Q9GQ60-1"/>
    <property type="protein sequence ID" value="CE43745"/>
    <property type="gene ID" value="WBGene00019955"/>
</dbReference>
<dbReference type="eggNOG" id="ENOG502TG51">
    <property type="taxonomic scope" value="Eukaryota"/>
</dbReference>
<dbReference type="InParanoid" id="Q9GQ60"/>
<dbReference type="OMA" id="SFSSHQM"/>
<dbReference type="OrthoDB" id="5851072at2759"/>
<dbReference type="PRO" id="PR:Q9GQ60"/>
<dbReference type="Proteomes" id="UP000001940">
    <property type="component" value="Chromosome IV"/>
</dbReference>
<dbReference type="Bgee" id="WBGene00019955">
    <property type="expression patterns" value="Expressed in larva and 3 other cell types or tissues"/>
</dbReference>
<dbReference type="ExpressionAtlas" id="Q9GQ60">
    <property type="expression patterns" value="baseline"/>
</dbReference>
<dbReference type="InterPro" id="IPR006627">
    <property type="entry name" value="TDU_repeat"/>
</dbReference>
<dbReference type="SMART" id="SM00711">
    <property type="entry name" value="TDU"/>
    <property type="match status" value="2"/>
</dbReference>
<keyword id="KW-0025">Alternative splicing</keyword>
<keyword id="KW-1185">Reference proteome</keyword>
<comment type="alternative products">
    <event type="alternative splicing"/>
    <isoform>
        <id>Q9GQ60-1</id>
        <name>b</name>
        <sequence type="displayed"/>
    </isoform>
    <isoform>
        <id>Q9GQ60-2</id>
        <name>a</name>
        <sequence type="described" ref="VSP_042370"/>
    </isoform>
</comment>
<feature type="chain" id="PRO_0000065428" description="Uncharacterized protein R08C7.12">
    <location>
        <begin position="1"/>
        <end position="335"/>
    </location>
</feature>
<feature type="region of interest" description="Disordered" evidence="1">
    <location>
        <begin position="153"/>
        <end position="174"/>
    </location>
</feature>
<feature type="region of interest" description="Disordered" evidence="1">
    <location>
        <begin position="218"/>
        <end position="239"/>
    </location>
</feature>
<feature type="region of interest" description="Disordered" evidence="1">
    <location>
        <begin position="254"/>
        <end position="295"/>
    </location>
</feature>
<feature type="compositionally biased region" description="Acidic residues" evidence="1">
    <location>
        <begin position="156"/>
        <end position="170"/>
    </location>
</feature>
<feature type="compositionally biased region" description="Low complexity" evidence="1">
    <location>
        <begin position="222"/>
        <end position="234"/>
    </location>
</feature>
<feature type="compositionally biased region" description="Low complexity" evidence="1">
    <location>
        <begin position="275"/>
        <end position="295"/>
    </location>
</feature>
<feature type="splice variant" id="VSP_042370" description="In isoform a." evidence="2">
    <location>
        <begin position="1"/>
        <end position="57"/>
    </location>
</feature>
<accession>Q9GQ60</accession>
<accession>G4SNZ2</accession>
<accession>G8JYE3</accession>